<reference key="1">
    <citation type="journal article" date="2005" name="Science">
        <title>The transcriptional landscape of the mammalian genome.</title>
        <authorList>
            <person name="Carninci P."/>
            <person name="Kasukawa T."/>
            <person name="Katayama S."/>
            <person name="Gough J."/>
            <person name="Frith M.C."/>
            <person name="Maeda N."/>
            <person name="Oyama R."/>
            <person name="Ravasi T."/>
            <person name="Lenhard B."/>
            <person name="Wells C."/>
            <person name="Kodzius R."/>
            <person name="Shimokawa K."/>
            <person name="Bajic V.B."/>
            <person name="Brenner S.E."/>
            <person name="Batalov S."/>
            <person name="Forrest A.R."/>
            <person name="Zavolan M."/>
            <person name="Davis M.J."/>
            <person name="Wilming L.G."/>
            <person name="Aidinis V."/>
            <person name="Allen J.E."/>
            <person name="Ambesi-Impiombato A."/>
            <person name="Apweiler R."/>
            <person name="Aturaliya R.N."/>
            <person name="Bailey T.L."/>
            <person name="Bansal M."/>
            <person name="Baxter L."/>
            <person name="Beisel K.W."/>
            <person name="Bersano T."/>
            <person name="Bono H."/>
            <person name="Chalk A.M."/>
            <person name="Chiu K.P."/>
            <person name="Choudhary V."/>
            <person name="Christoffels A."/>
            <person name="Clutterbuck D.R."/>
            <person name="Crowe M.L."/>
            <person name="Dalla E."/>
            <person name="Dalrymple B.P."/>
            <person name="de Bono B."/>
            <person name="Della Gatta G."/>
            <person name="di Bernardo D."/>
            <person name="Down T."/>
            <person name="Engstrom P."/>
            <person name="Fagiolini M."/>
            <person name="Faulkner G."/>
            <person name="Fletcher C.F."/>
            <person name="Fukushima T."/>
            <person name="Furuno M."/>
            <person name="Futaki S."/>
            <person name="Gariboldi M."/>
            <person name="Georgii-Hemming P."/>
            <person name="Gingeras T.R."/>
            <person name="Gojobori T."/>
            <person name="Green R.E."/>
            <person name="Gustincich S."/>
            <person name="Harbers M."/>
            <person name="Hayashi Y."/>
            <person name="Hensch T.K."/>
            <person name="Hirokawa N."/>
            <person name="Hill D."/>
            <person name="Huminiecki L."/>
            <person name="Iacono M."/>
            <person name="Ikeo K."/>
            <person name="Iwama A."/>
            <person name="Ishikawa T."/>
            <person name="Jakt M."/>
            <person name="Kanapin A."/>
            <person name="Katoh M."/>
            <person name="Kawasawa Y."/>
            <person name="Kelso J."/>
            <person name="Kitamura H."/>
            <person name="Kitano H."/>
            <person name="Kollias G."/>
            <person name="Krishnan S.P."/>
            <person name="Kruger A."/>
            <person name="Kummerfeld S.K."/>
            <person name="Kurochkin I.V."/>
            <person name="Lareau L.F."/>
            <person name="Lazarevic D."/>
            <person name="Lipovich L."/>
            <person name="Liu J."/>
            <person name="Liuni S."/>
            <person name="McWilliam S."/>
            <person name="Madan Babu M."/>
            <person name="Madera M."/>
            <person name="Marchionni L."/>
            <person name="Matsuda H."/>
            <person name="Matsuzawa S."/>
            <person name="Miki H."/>
            <person name="Mignone F."/>
            <person name="Miyake S."/>
            <person name="Morris K."/>
            <person name="Mottagui-Tabar S."/>
            <person name="Mulder N."/>
            <person name="Nakano N."/>
            <person name="Nakauchi H."/>
            <person name="Ng P."/>
            <person name="Nilsson R."/>
            <person name="Nishiguchi S."/>
            <person name="Nishikawa S."/>
            <person name="Nori F."/>
            <person name="Ohara O."/>
            <person name="Okazaki Y."/>
            <person name="Orlando V."/>
            <person name="Pang K.C."/>
            <person name="Pavan W.J."/>
            <person name="Pavesi G."/>
            <person name="Pesole G."/>
            <person name="Petrovsky N."/>
            <person name="Piazza S."/>
            <person name="Reed J."/>
            <person name="Reid J.F."/>
            <person name="Ring B.Z."/>
            <person name="Ringwald M."/>
            <person name="Rost B."/>
            <person name="Ruan Y."/>
            <person name="Salzberg S.L."/>
            <person name="Sandelin A."/>
            <person name="Schneider C."/>
            <person name="Schoenbach C."/>
            <person name="Sekiguchi K."/>
            <person name="Semple C.A."/>
            <person name="Seno S."/>
            <person name="Sessa L."/>
            <person name="Sheng Y."/>
            <person name="Shibata Y."/>
            <person name="Shimada H."/>
            <person name="Shimada K."/>
            <person name="Silva D."/>
            <person name="Sinclair B."/>
            <person name="Sperling S."/>
            <person name="Stupka E."/>
            <person name="Sugiura K."/>
            <person name="Sultana R."/>
            <person name="Takenaka Y."/>
            <person name="Taki K."/>
            <person name="Tammoja K."/>
            <person name="Tan S.L."/>
            <person name="Tang S."/>
            <person name="Taylor M.S."/>
            <person name="Tegner J."/>
            <person name="Teichmann S.A."/>
            <person name="Ueda H.R."/>
            <person name="van Nimwegen E."/>
            <person name="Verardo R."/>
            <person name="Wei C.L."/>
            <person name="Yagi K."/>
            <person name="Yamanishi H."/>
            <person name="Zabarovsky E."/>
            <person name="Zhu S."/>
            <person name="Zimmer A."/>
            <person name="Hide W."/>
            <person name="Bult C."/>
            <person name="Grimmond S.M."/>
            <person name="Teasdale R.D."/>
            <person name="Liu E.T."/>
            <person name="Brusic V."/>
            <person name="Quackenbush J."/>
            <person name="Wahlestedt C."/>
            <person name="Mattick J.S."/>
            <person name="Hume D.A."/>
            <person name="Kai C."/>
            <person name="Sasaki D."/>
            <person name="Tomaru Y."/>
            <person name="Fukuda S."/>
            <person name="Kanamori-Katayama M."/>
            <person name="Suzuki M."/>
            <person name="Aoki J."/>
            <person name="Arakawa T."/>
            <person name="Iida J."/>
            <person name="Imamura K."/>
            <person name="Itoh M."/>
            <person name="Kato T."/>
            <person name="Kawaji H."/>
            <person name="Kawagashira N."/>
            <person name="Kawashima T."/>
            <person name="Kojima M."/>
            <person name="Kondo S."/>
            <person name="Konno H."/>
            <person name="Nakano K."/>
            <person name="Ninomiya N."/>
            <person name="Nishio T."/>
            <person name="Okada M."/>
            <person name="Plessy C."/>
            <person name="Shibata K."/>
            <person name="Shiraki T."/>
            <person name="Suzuki S."/>
            <person name="Tagami M."/>
            <person name="Waki K."/>
            <person name="Watahiki A."/>
            <person name="Okamura-Oho Y."/>
            <person name="Suzuki H."/>
            <person name="Kawai J."/>
            <person name="Hayashizaki Y."/>
        </authorList>
    </citation>
    <scope>NUCLEOTIDE SEQUENCE [LARGE SCALE MRNA] (ISOFORM 2)</scope>
    <source>
        <strain>C57BL/6J</strain>
        <tissue>Retina</tissue>
    </source>
</reference>
<reference key="2">
    <citation type="journal article" date="2009" name="PLoS Biol.">
        <title>Lineage-specific biology revealed by a finished genome assembly of the mouse.</title>
        <authorList>
            <person name="Church D.M."/>
            <person name="Goodstadt L."/>
            <person name="Hillier L.W."/>
            <person name="Zody M.C."/>
            <person name="Goldstein S."/>
            <person name="She X."/>
            <person name="Bult C.J."/>
            <person name="Agarwala R."/>
            <person name="Cherry J.L."/>
            <person name="DiCuccio M."/>
            <person name="Hlavina W."/>
            <person name="Kapustin Y."/>
            <person name="Meric P."/>
            <person name="Maglott D."/>
            <person name="Birtle Z."/>
            <person name="Marques A.C."/>
            <person name="Graves T."/>
            <person name="Zhou S."/>
            <person name="Teague B."/>
            <person name="Potamousis K."/>
            <person name="Churas C."/>
            <person name="Place M."/>
            <person name="Herschleb J."/>
            <person name="Runnheim R."/>
            <person name="Forrest D."/>
            <person name="Amos-Landgraf J."/>
            <person name="Schwartz D.C."/>
            <person name="Cheng Z."/>
            <person name="Lindblad-Toh K."/>
            <person name="Eichler E.E."/>
            <person name="Ponting C.P."/>
        </authorList>
    </citation>
    <scope>NUCLEOTIDE SEQUENCE [LARGE SCALE GENOMIC DNA]</scope>
    <source>
        <strain>C57BL/6J</strain>
    </source>
</reference>
<reference key="3">
    <citation type="submission" date="2004-01" db="EMBL/GenBank/DDBJ databases">
        <title>Expressed sequence tag analysis of mouse retina.</title>
        <authorList>
            <person name="Ida H."/>
            <person name="Boylan S."/>
            <person name="Weigel A."/>
            <person name="Smit-McBride Z."/>
            <person name="Chao A."/>
            <person name="Gao J."/>
            <person name="Buchoff P."/>
            <person name="Wistow G."/>
            <person name="Hjelmeland L."/>
        </authorList>
    </citation>
    <scope>NUCLEOTIDE SEQUENCE [LARGE SCALE MRNA] OF 1-181 (ISOFORM 1)</scope>
    <source>
        <strain>C57BL/6J</strain>
        <tissue>Retina</tissue>
    </source>
</reference>
<reference key="4">
    <citation type="journal article" date="2013" name="PLoS ONE">
        <title>Sterile alpha motif containing 7 (samd7) is a novel crx-regulated transcriptional repressor in the retina.</title>
        <authorList>
            <person name="Hlawatsch J."/>
            <person name="Karlstetter M."/>
            <person name="Aslanidis A."/>
            <person name="Lueckoff A."/>
            <person name="Walczak Y."/>
            <person name="Plank M."/>
            <person name="Boeck J."/>
            <person name="Langmann T."/>
        </authorList>
    </citation>
    <scope>FUNCTION</scope>
    <scope>TISSUE SPECIFICITY</scope>
    <scope>SUBCELLULAR LOCATION</scope>
    <scope>INDUCTION BY CRX</scope>
</reference>
<reference key="5">
    <citation type="journal article" date="2017" name="Proc. Natl. Acad. Sci. U.S.A.">
        <title>Samd7 is a cell type-specific PRC1 component essential for establishing retinal rod photoreceptor identity.</title>
        <authorList>
            <person name="Omori Y."/>
            <person name="Kubo S."/>
            <person name="Kon T."/>
            <person name="Furuhashi M."/>
            <person name="Narita H."/>
            <person name="Kominami T."/>
            <person name="Ueno A."/>
            <person name="Tsutsumi R."/>
            <person name="Chaya T."/>
            <person name="Yamamoto H."/>
            <person name="Suetake I."/>
            <person name="Ueno S."/>
            <person name="Koseki H."/>
            <person name="Nakagawa A."/>
            <person name="Furukawa T."/>
        </authorList>
    </citation>
    <scope>FUNCTION</scope>
    <scope>SUBCELLULAR LOCATION</scope>
    <scope>SUBUNIT</scope>
    <scope>IDENTIFICATION IN A PRC1-LIKE COMPLEX</scope>
    <scope>DISRUPTION PHENOTYPE</scope>
    <scope>DOMAIN</scope>
    <scope>TISSUE SPECIFICITY</scope>
    <scope>DEVELOPMENTAL STAGE</scope>
    <scope>INTERACTION WITH RNF2; PHC2 AND NR2E3</scope>
    <scope>MUTAGENESIS OF LEU-372</scope>
</reference>
<reference key="6">
    <citation type="journal article" date="2021" name="Sci. Rep.">
        <title>Functional analysis of Samd11, a retinal photoreceptor PRC1 component, in establishing rod photoreceptor identity.</title>
        <authorList>
            <person name="Kubo S."/>
            <person name="Yamamoto H."/>
            <person name="Kajimura N."/>
            <person name="Omori Y."/>
            <person name="Maeda Y."/>
            <person name="Chaya T."/>
            <person name="Furukawa T."/>
        </authorList>
    </citation>
    <scope>FUNCTION</scope>
    <scope>DISRUPTION PHENOTYPE</scope>
    <scope>TISSUE SPECIFICITY</scope>
    <scope>IDENTIFICATION IN A PRC1-LIKE COMPLEX</scope>
    <scope>INTERACTION WITH SAMD11</scope>
</reference>
<reference key="7">
    <citation type="journal article" date="2024" name="Am. J. Hum. Genet.">
        <title>Mutations in SAMD7 cause autosomal-recessive macular dystrophy with or without cone dysfunction.</title>
        <authorList>
            <person name="Bauwens M."/>
            <person name="Celik E."/>
            <person name="Zur D."/>
            <person name="Lin S."/>
            <person name="Quinodoz M."/>
            <person name="Michaelides M."/>
            <person name="Webster A.R."/>
            <person name="Van Den Broeck F."/>
            <person name="Leroy B.P."/>
            <person name="Rizel L."/>
            <person name="Moye A.R."/>
            <person name="Meunier A."/>
            <person name="Tran H.V."/>
            <person name="Moulin A.P."/>
            <person name="Mahieu Q."/>
            <person name="Van Heetvelde M."/>
            <person name="Arno G."/>
            <person name="Rivolta C."/>
            <person name="De Baere E."/>
            <person name="Ben-Yosef T."/>
        </authorList>
    </citation>
    <scope>MUTAGENESIS OF ASP-328</scope>
</reference>
<gene>
    <name type="primary">Samd7</name>
</gene>
<sequence length="445" mass="49259">MTNPMMSVSSLLTSGQQKVPMVPSPFGPPIVDRDVLSSSIAPTDPSQFCVPSQFGSSGLPNANMPNPLSSHFYSGWGILPPEPIKAVTTRNEMFERHHAARAEMEMYSLYQQRRMERVNPKGLSGLGIPLFYGSSCLGGPTGFQGRSTLPASDVHLHRSTFRHLQGNPILLATRPHFTECWGQKYRLRRGAVYQKPPESDTESFKSQAEEKSSSQMPTLSYEEEEYIKDPDIEVDNQQKPRVADGKPTTVPANPHGELHTHQRKPSSLEANAWDDGKGKPSEQVYEGCDGKNGVFRPVSILPLSGTHEQVALRENCSLSDIQKWTVDDVYNFIRSLPGCSDYAQVFKDHAIDGETLPLLTEQHLRGTMGLKLGPALKIQSQVSQHVGNMFCKKLPSLPTHARQAFDQPADTSPLLDMSSWSDGLSIPGPQDLLSPKRTEQDVMRN</sequence>
<proteinExistence type="evidence at protein level"/>
<keyword id="KW-0025">Alternative splicing</keyword>
<keyword id="KW-0963">Cytoplasm</keyword>
<keyword id="KW-0539">Nucleus</keyword>
<keyword id="KW-1185">Reference proteome</keyword>
<keyword id="KW-0678">Repressor</keyword>
<keyword id="KW-0804">Transcription</keyword>
<keyword id="KW-0805">Transcription regulation</keyword>
<comment type="function">
    <text evidence="3 4 5">Component of a Polycomb group (PcG) multiprotein PRC1-like complex, essential for establishing rod photoreceptor cell identity and function by silencing nonrod gene expression in developing rod photoreceptor cells (PubMed:28900001, PubMed:33603070). Via its association with the PRC1-like complex, promotes epigenetic repressive marks H3K27me3 and H2AK119ub marks in nonrod genes, silencing their transcription (PubMed:28900001). Represses Crx-controlled photoreceptor-specific gene expression (PubMed:23565263).</text>
</comment>
<comment type="subunit">
    <text evidence="4 5">Monomer, homodimer and homooligomer (PubMed:28900001). Component of a Polycomb group (PcG) multiprotein PRC1-like complex (PubMed:28900001, PubMed:33603070). Interacts with PHC2 and NR2E3 (PubMed:28900001). Interacts with RNF1 in a PHC2-dependent manner (PubMed:28900001). Interacts with SAMD11 (PubMed:33603070).</text>
</comment>
<comment type="subcellular location">
    <subcellularLocation>
        <location evidence="3 4">Nucleus</location>
    </subcellularLocation>
    <subcellularLocation>
        <location evidence="3">Cytoplasm</location>
    </subcellularLocation>
    <text evidence="4">Co-localizes with PHC2 and RNF2 in nuclear polycomb bodies.</text>
</comment>
<comment type="alternative products">
    <event type="alternative splicing"/>
    <isoform>
        <id>Q8C8Y5-1</id>
        <name>1</name>
        <sequence type="displayed"/>
    </isoform>
    <isoform>
        <id>Q8C8Y5-3</id>
        <name>2</name>
        <sequence type="described" ref="VSP_059092 VSP_059093"/>
    </isoform>
</comment>
<comment type="tissue specificity">
    <text evidence="3 4 5">Expressed in the retina and the pineal gland (PubMed:23565263). In the retina, it is predominantly expressed in the outer nuclear layer and developing rod photoreceptors (PubMed:23565263, PubMed:28900001, PubMed:33603070).</text>
</comment>
<comment type="developmental stage">
    <text evidence="4">Expression first detected at day postnatal day 1 (P1) in the outer part of the neuroblastic layer containing rod photoreceptor precursor cells (PubMed:28900001). Increased expression is observed in the outer nuclear layer (ONL) at P6 and expression decreases in the ONL after P9 but continues until 4 weeks (PubMed:28900001).</text>
</comment>
<comment type="induction">
    <text evidence="3">Transcriptionally regulated by CRX.</text>
</comment>
<comment type="domain">
    <text evidence="4">The SAM domain mediates its oligomerization and localization to nuclear polycomb bodies.</text>
</comment>
<comment type="disruption phenotype">
    <text evidence="4 5">Samd7 knockout mice show decreased expression of multiple rod genes in the retina, ectopic expression of nonrod genes including S-opsin in rod photoreceptor cells and impaired rod photoreceptor sensitivity (PubMed:28900001). Show an up-regulation and down-regulation of cone and rod genes, respectively in the retina (PubMed:28900001). Double Samd7 and Samd11 knockout mice show shortened and disorganized photoreceptor outer segments, reduced light sensitivity and delayed signal transmission from rods to rod bipolar cells at low flash luminescence (PubMed:33603070).</text>
</comment>
<comment type="miscellaneous">
    <molecule>Isoform 2</molecule>
    <text evidence="7">May be produced at very low levels due to a premature stop codon in the mRNA, leading to nonsense-mediated mRNA decay.</text>
</comment>
<comment type="sequence caution" evidence="7">
    <conflict type="erroneous translation">
        <sequence resource="EMBL-CDS" id="BAC31828"/>
    </conflict>
    <text>Wrong choice of CDS.</text>
</comment>
<accession>Q8C8Y5</accession>
<accession>F8WHA0</accession>
<accession>G3UXH0</accession>
<organism>
    <name type="scientific">Mus musculus</name>
    <name type="common">Mouse</name>
    <dbReference type="NCBI Taxonomy" id="10090"/>
    <lineage>
        <taxon>Eukaryota</taxon>
        <taxon>Metazoa</taxon>
        <taxon>Chordata</taxon>
        <taxon>Craniata</taxon>
        <taxon>Vertebrata</taxon>
        <taxon>Euteleostomi</taxon>
        <taxon>Mammalia</taxon>
        <taxon>Eutheria</taxon>
        <taxon>Euarchontoglires</taxon>
        <taxon>Glires</taxon>
        <taxon>Rodentia</taxon>
        <taxon>Myomorpha</taxon>
        <taxon>Muroidea</taxon>
        <taxon>Muridae</taxon>
        <taxon>Murinae</taxon>
        <taxon>Mus</taxon>
        <taxon>Mus</taxon>
    </lineage>
</organism>
<protein>
    <recommendedName>
        <fullName>Sterile alpha motif domain-containing protein 7</fullName>
        <shortName>SAM domain-containing protein 7</shortName>
    </recommendedName>
</protein>
<dbReference type="EMBL" id="AK044227">
    <property type="protein sequence ID" value="BAC31828.1"/>
    <property type="status" value="ALT_SEQ"/>
    <property type="molecule type" value="mRNA"/>
</dbReference>
<dbReference type="EMBL" id="AC158135">
    <property type="status" value="NOT_ANNOTATED_CDS"/>
    <property type="molecule type" value="Genomic_DNA"/>
</dbReference>
<dbReference type="EMBL" id="CK618776">
    <property type="status" value="NOT_ANNOTATED_CDS"/>
    <property type="molecule type" value="mRNA"/>
</dbReference>
<dbReference type="CCDS" id="CCDS17285.2">
    <molecule id="Q8C8Y5-1"/>
</dbReference>
<dbReference type="RefSeq" id="NP_083765.2">
    <molecule id="Q8C8Y5-1"/>
    <property type="nucleotide sequence ID" value="NM_029489.4"/>
</dbReference>
<dbReference type="RefSeq" id="XP_017175280.1">
    <molecule id="Q8C8Y5-1"/>
    <property type="nucleotide sequence ID" value="XM_017319791.1"/>
</dbReference>
<dbReference type="SMR" id="Q8C8Y5"/>
<dbReference type="FunCoup" id="Q8C8Y5">
    <property type="interactions" value="1214"/>
</dbReference>
<dbReference type="STRING" id="10090.ENSMUSP00000103897"/>
<dbReference type="GlyGen" id="Q8C8Y5">
    <property type="glycosylation" value="1 site"/>
</dbReference>
<dbReference type="PhosphoSitePlus" id="Q8C8Y5"/>
<dbReference type="jPOST" id="Q8C8Y5"/>
<dbReference type="PaxDb" id="10090-ENSMUSP00000103897"/>
<dbReference type="ProteomicsDB" id="256698">
    <molecule id="Q8C8Y5-1"/>
</dbReference>
<dbReference type="ProteomicsDB" id="256699">
    <molecule id="Q8C8Y5-3"/>
</dbReference>
<dbReference type="Antibodypedia" id="51043">
    <property type="antibodies" value="137 antibodies from 14 providers"/>
</dbReference>
<dbReference type="DNASU" id="75953"/>
<dbReference type="Ensembl" id="ENSMUST00000108262.10">
    <molecule id="Q8C8Y5-1"/>
    <property type="protein sequence ID" value="ENSMUSP00000103897.4"/>
    <property type="gene ID" value="ENSMUSG00000051860.14"/>
</dbReference>
<dbReference type="Ensembl" id="ENSMUST00000174395.8">
    <molecule id="Q8C8Y5-3"/>
    <property type="protein sequence ID" value="ENSMUSP00000133687.2"/>
    <property type="gene ID" value="ENSMUSG00000051860.14"/>
</dbReference>
<dbReference type="GeneID" id="75953"/>
<dbReference type="KEGG" id="mmu:75953"/>
<dbReference type="UCSC" id="uc008ovg.2">
    <molecule id="Q8C8Y5-1"/>
    <property type="organism name" value="mouse"/>
</dbReference>
<dbReference type="AGR" id="MGI:1923203"/>
<dbReference type="CTD" id="344658"/>
<dbReference type="MGI" id="MGI:1923203">
    <property type="gene designation" value="Samd7"/>
</dbReference>
<dbReference type="VEuPathDB" id="HostDB:ENSMUSG00000051860"/>
<dbReference type="eggNOG" id="KOG3829">
    <property type="taxonomic scope" value="Eukaryota"/>
</dbReference>
<dbReference type="GeneTree" id="ENSGT00940000160075"/>
<dbReference type="InParanoid" id="Q8C8Y5"/>
<dbReference type="OMA" id="MLYMMNL"/>
<dbReference type="OrthoDB" id="9943471at2759"/>
<dbReference type="PhylomeDB" id="Q8C8Y5"/>
<dbReference type="TreeFam" id="TF331299"/>
<dbReference type="BioGRID-ORCS" id="75953">
    <property type="hits" value="1 hit in 76 CRISPR screens"/>
</dbReference>
<dbReference type="PRO" id="PR:Q8C8Y5"/>
<dbReference type="Proteomes" id="UP000000589">
    <property type="component" value="Chromosome 3"/>
</dbReference>
<dbReference type="RNAct" id="Q8C8Y5">
    <property type="molecule type" value="protein"/>
</dbReference>
<dbReference type="Bgee" id="ENSMUSG00000051860">
    <property type="expression patterns" value="Expressed in retinal neural layer and 42 other cell types or tissues"/>
</dbReference>
<dbReference type="ExpressionAtlas" id="Q8C8Y5">
    <property type="expression patterns" value="baseline and differential"/>
</dbReference>
<dbReference type="GO" id="GO:0005737">
    <property type="term" value="C:cytoplasm"/>
    <property type="evidence" value="ECO:0000314"/>
    <property type="project" value="UniProtKB"/>
</dbReference>
<dbReference type="GO" id="GO:0005634">
    <property type="term" value="C:nucleus"/>
    <property type="evidence" value="ECO:0000314"/>
    <property type="project" value="UniProtKB"/>
</dbReference>
<dbReference type="GO" id="GO:0035102">
    <property type="term" value="C:PRC1 complex"/>
    <property type="evidence" value="ECO:0000314"/>
    <property type="project" value="UniProtKB"/>
</dbReference>
<dbReference type="GO" id="GO:0001227">
    <property type="term" value="F:DNA-binding transcription repressor activity, RNA polymerase II-specific"/>
    <property type="evidence" value="ECO:0000315"/>
    <property type="project" value="UniProtKB"/>
</dbReference>
<dbReference type="GO" id="GO:0010629">
    <property type="term" value="P:negative regulation of gene expression"/>
    <property type="evidence" value="ECO:0000314"/>
    <property type="project" value="UniProtKB"/>
</dbReference>
<dbReference type="GO" id="GO:0045814">
    <property type="term" value="P:negative regulation of gene expression, epigenetic"/>
    <property type="evidence" value="ECO:0000315"/>
    <property type="project" value="UniProtKB"/>
</dbReference>
<dbReference type="GO" id="GO:0046548">
    <property type="term" value="P:retinal rod cell development"/>
    <property type="evidence" value="ECO:0000315"/>
    <property type="project" value="UniProtKB"/>
</dbReference>
<dbReference type="CDD" id="cd09579">
    <property type="entry name" value="SAM_Samd7_11"/>
    <property type="match status" value="1"/>
</dbReference>
<dbReference type="Gene3D" id="1.10.150.50">
    <property type="entry name" value="Transcription Factor, Ets-1"/>
    <property type="match status" value="1"/>
</dbReference>
<dbReference type="InterPro" id="IPR050548">
    <property type="entry name" value="PcG_chromatin_remod_factors"/>
</dbReference>
<dbReference type="InterPro" id="IPR001660">
    <property type="entry name" value="SAM"/>
</dbReference>
<dbReference type="InterPro" id="IPR013761">
    <property type="entry name" value="SAM/pointed_sf"/>
</dbReference>
<dbReference type="PANTHER" id="PTHR12247">
    <property type="entry name" value="POLYCOMB GROUP PROTEIN"/>
    <property type="match status" value="1"/>
</dbReference>
<dbReference type="PANTHER" id="PTHR12247:SF89">
    <property type="entry name" value="STERILE ALPHA MOTIF DOMAIN-CONTAINING PROTEIN 7"/>
    <property type="match status" value="1"/>
</dbReference>
<dbReference type="Pfam" id="PF00536">
    <property type="entry name" value="SAM_1"/>
    <property type="match status" value="1"/>
</dbReference>
<dbReference type="SMART" id="SM00454">
    <property type="entry name" value="SAM"/>
    <property type="match status" value="1"/>
</dbReference>
<dbReference type="SUPFAM" id="SSF47769">
    <property type="entry name" value="SAM/Pointed domain"/>
    <property type="match status" value="1"/>
</dbReference>
<dbReference type="PROSITE" id="PS50105">
    <property type="entry name" value="SAM_DOMAIN"/>
    <property type="match status" value="1"/>
</dbReference>
<name>SAMD7_MOUSE</name>
<evidence type="ECO:0000255" key="1">
    <source>
        <dbReference type="PROSITE-ProRule" id="PRU00184"/>
    </source>
</evidence>
<evidence type="ECO:0000256" key="2">
    <source>
        <dbReference type="SAM" id="MobiDB-lite"/>
    </source>
</evidence>
<evidence type="ECO:0000269" key="3">
    <source>
    </source>
</evidence>
<evidence type="ECO:0000269" key="4">
    <source>
    </source>
</evidence>
<evidence type="ECO:0000269" key="5">
    <source>
    </source>
</evidence>
<evidence type="ECO:0000269" key="6">
    <source>
    </source>
</evidence>
<evidence type="ECO:0000305" key="7"/>
<feature type="chain" id="PRO_0000263103" description="Sterile alpha motif domain-containing protein 7">
    <location>
        <begin position="1"/>
        <end position="445"/>
    </location>
</feature>
<feature type="domain" description="SAM" evidence="1">
    <location>
        <begin position="324"/>
        <end position="378"/>
    </location>
</feature>
<feature type="region of interest" description="Required for localization to nuclear polycomb bodies" evidence="4">
    <location>
        <begin position="98"/>
        <end position="172"/>
    </location>
</feature>
<feature type="region of interest" description="Disordered" evidence="2">
    <location>
        <begin position="193"/>
        <end position="282"/>
    </location>
</feature>
<feature type="region of interest" description="Disordered" evidence="2">
    <location>
        <begin position="425"/>
        <end position="445"/>
    </location>
</feature>
<feature type="compositionally biased region" description="Basic and acidic residues" evidence="2">
    <location>
        <begin position="227"/>
        <end position="244"/>
    </location>
</feature>
<feature type="compositionally biased region" description="Basic and acidic residues" evidence="2">
    <location>
        <begin position="434"/>
        <end position="445"/>
    </location>
</feature>
<feature type="splice variant" id="VSP_059092" description="In isoform 2.">
    <original>DVLSSS</original>
    <variation>LGHFTT</variation>
    <location>
        <begin position="34"/>
        <end position="39"/>
    </location>
</feature>
<feature type="splice variant" id="VSP_059093" description="In isoform 2.">
    <location>
        <begin position="40"/>
        <end position="445"/>
    </location>
</feature>
<feature type="mutagenesis site" description="Decreased repression of CRX-controlled gene expression." evidence="6">
    <original>D</original>
    <variation>V</variation>
    <location>
        <position position="328"/>
    </location>
</feature>
<feature type="mutagenesis site" description="Disrupts oligomerization and localization to nuclear polycomb bodies." evidence="4">
    <original>L</original>
    <variation>R</variation>
    <location>
        <position position="372"/>
    </location>
</feature>